<organism>
    <name type="scientific">Homo sapiens</name>
    <name type="common">Human</name>
    <dbReference type="NCBI Taxonomy" id="9606"/>
    <lineage>
        <taxon>Eukaryota</taxon>
        <taxon>Metazoa</taxon>
        <taxon>Chordata</taxon>
        <taxon>Craniata</taxon>
        <taxon>Vertebrata</taxon>
        <taxon>Euteleostomi</taxon>
        <taxon>Mammalia</taxon>
        <taxon>Eutheria</taxon>
        <taxon>Euarchontoglires</taxon>
        <taxon>Primates</taxon>
        <taxon>Haplorrhini</taxon>
        <taxon>Catarrhini</taxon>
        <taxon>Hominidae</taxon>
        <taxon>Homo</taxon>
    </lineage>
</organism>
<name>ZN491_HUMAN</name>
<gene>
    <name type="primary">ZNF491</name>
</gene>
<dbReference type="EMBL" id="AK092110">
    <property type="protein sequence ID" value="BAC03809.1"/>
    <property type="status" value="ALT_SEQ"/>
    <property type="molecule type" value="mRNA"/>
</dbReference>
<dbReference type="EMBL" id="AK096593">
    <property type="protein sequence ID" value="BAC04824.1"/>
    <property type="molecule type" value="mRNA"/>
</dbReference>
<dbReference type="EMBL" id="BC101590">
    <property type="protein sequence ID" value="AAI01591.1"/>
    <property type="molecule type" value="mRNA"/>
</dbReference>
<dbReference type="EMBL" id="BC101592">
    <property type="protein sequence ID" value="AAI01593.1"/>
    <property type="molecule type" value="mRNA"/>
</dbReference>
<dbReference type="CCDS" id="CCDS12267.1"/>
<dbReference type="RefSeq" id="NP_689569.2">
    <property type="nucleotide sequence ID" value="NM_152356.3"/>
</dbReference>
<dbReference type="RefSeq" id="XP_005259787.1">
    <property type="nucleotide sequence ID" value="XM_005259730.5"/>
</dbReference>
<dbReference type="RefSeq" id="XP_047294100.1">
    <property type="nucleotide sequence ID" value="XM_047438144.1"/>
</dbReference>
<dbReference type="RefSeq" id="XP_054175728.1">
    <property type="nucleotide sequence ID" value="XM_054319753.1"/>
</dbReference>
<dbReference type="RefSeq" id="XP_054175729.1">
    <property type="nucleotide sequence ID" value="XM_054319754.1"/>
</dbReference>
<dbReference type="SMR" id="Q8N8L2"/>
<dbReference type="BioGRID" id="125952">
    <property type="interactions" value="23"/>
</dbReference>
<dbReference type="FunCoup" id="Q8N8L2">
    <property type="interactions" value="15"/>
</dbReference>
<dbReference type="IntAct" id="Q8N8L2">
    <property type="interactions" value="19"/>
</dbReference>
<dbReference type="STRING" id="9606.ENSP00000313443"/>
<dbReference type="iPTMnet" id="Q8N8L2"/>
<dbReference type="PhosphoSitePlus" id="Q8N8L2"/>
<dbReference type="BioMuta" id="ZNF491"/>
<dbReference type="DMDM" id="51316965"/>
<dbReference type="jPOST" id="Q8N8L2"/>
<dbReference type="MassIVE" id="Q8N8L2"/>
<dbReference type="PaxDb" id="9606-ENSP00000313443"/>
<dbReference type="PeptideAtlas" id="Q8N8L2"/>
<dbReference type="ProteomicsDB" id="72434"/>
<dbReference type="Antibodypedia" id="13218">
    <property type="antibodies" value="39 antibodies from 12 providers"/>
</dbReference>
<dbReference type="DNASU" id="126069"/>
<dbReference type="Ensembl" id="ENST00000323169.10">
    <property type="protein sequence ID" value="ENSP00000313443.5"/>
    <property type="gene ID" value="ENSG00000177599.13"/>
</dbReference>
<dbReference type="GeneID" id="126069"/>
<dbReference type="KEGG" id="hsa:126069"/>
<dbReference type="MANE-Select" id="ENST00000323169.10">
    <property type="protein sequence ID" value="ENSP00000313443.5"/>
    <property type="RefSeq nucleotide sequence ID" value="NM_152356.4"/>
    <property type="RefSeq protein sequence ID" value="NP_689569.2"/>
</dbReference>
<dbReference type="UCSC" id="uc002mso.2">
    <property type="organism name" value="human"/>
</dbReference>
<dbReference type="AGR" id="HGNC:23706"/>
<dbReference type="CTD" id="126069"/>
<dbReference type="DisGeNET" id="126069"/>
<dbReference type="GeneCards" id="ZNF491"/>
<dbReference type="HGNC" id="HGNC:23706">
    <property type="gene designation" value="ZNF491"/>
</dbReference>
<dbReference type="HPA" id="ENSG00000177599">
    <property type="expression patterns" value="Tissue enhanced (retina)"/>
</dbReference>
<dbReference type="neXtProt" id="NX_Q8N8L2"/>
<dbReference type="OpenTargets" id="ENSG00000177599"/>
<dbReference type="PharmGKB" id="PA134982286"/>
<dbReference type="VEuPathDB" id="HostDB:ENSG00000177599"/>
<dbReference type="eggNOG" id="KOG1721">
    <property type="taxonomic scope" value="Eukaryota"/>
</dbReference>
<dbReference type="GeneTree" id="ENSGT00940000163273"/>
<dbReference type="HOGENOM" id="CLU_002678_44_0_1"/>
<dbReference type="InParanoid" id="Q8N8L2"/>
<dbReference type="OMA" id="WHSSVRI"/>
<dbReference type="OrthoDB" id="9411774at2759"/>
<dbReference type="PAN-GO" id="Q8N8L2">
    <property type="GO annotations" value="3 GO annotations based on evolutionary models"/>
</dbReference>
<dbReference type="PhylomeDB" id="Q8N8L2"/>
<dbReference type="TreeFam" id="TF338854"/>
<dbReference type="PathwayCommons" id="Q8N8L2"/>
<dbReference type="SignaLink" id="Q8N8L2"/>
<dbReference type="BioGRID-ORCS" id="126069">
    <property type="hits" value="7 hits in 1133 CRISPR screens"/>
</dbReference>
<dbReference type="GenomeRNAi" id="126069"/>
<dbReference type="Pharos" id="Q8N8L2">
    <property type="development level" value="Tdark"/>
</dbReference>
<dbReference type="PRO" id="PR:Q8N8L2"/>
<dbReference type="Proteomes" id="UP000005640">
    <property type="component" value="Chromosome 19"/>
</dbReference>
<dbReference type="RNAct" id="Q8N8L2">
    <property type="molecule type" value="protein"/>
</dbReference>
<dbReference type="Bgee" id="ENSG00000177599">
    <property type="expression patterns" value="Expressed in male germ line stem cell (sensu Vertebrata) in testis and 94 other cell types or tissues"/>
</dbReference>
<dbReference type="ExpressionAtlas" id="Q8N8L2">
    <property type="expression patterns" value="baseline and differential"/>
</dbReference>
<dbReference type="GO" id="GO:0005634">
    <property type="term" value="C:nucleus"/>
    <property type="evidence" value="ECO:0000318"/>
    <property type="project" value="GO_Central"/>
</dbReference>
<dbReference type="GO" id="GO:0000981">
    <property type="term" value="F:DNA-binding transcription factor activity, RNA polymerase II-specific"/>
    <property type="evidence" value="ECO:0000318"/>
    <property type="project" value="GO_Central"/>
</dbReference>
<dbReference type="GO" id="GO:0000977">
    <property type="term" value="F:RNA polymerase II transcription regulatory region sequence-specific DNA binding"/>
    <property type="evidence" value="ECO:0000318"/>
    <property type="project" value="GO_Central"/>
</dbReference>
<dbReference type="GO" id="GO:0008270">
    <property type="term" value="F:zinc ion binding"/>
    <property type="evidence" value="ECO:0007669"/>
    <property type="project" value="UniProtKB-KW"/>
</dbReference>
<dbReference type="GO" id="GO:0006357">
    <property type="term" value="P:regulation of transcription by RNA polymerase II"/>
    <property type="evidence" value="ECO:0000318"/>
    <property type="project" value="GO_Central"/>
</dbReference>
<dbReference type="FunFam" id="3.30.160.60:FF:003708">
    <property type="match status" value="1"/>
</dbReference>
<dbReference type="FunFam" id="3.30.160.60:FF:000838">
    <property type="entry name" value="Zinc finger protein 14"/>
    <property type="match status" value="2"/>
</dbReference>
<dbReference type="FunFam" id="3.30.160.60:FF:000240">
    <property type="entry name" value="Zinc finger protein 250"/>
    <property type="match status" value="1"/>
</dbReference>
<dbReference type="FunFam" id="3.30.160.60:FF:000193">
    <property type="entry name" value="Zinc finger protein 300"/>
    <property type="match status" value="1"/>
</dbReference>
<dbReference type="FunFam" id="3.30.160.60:FF:000184">
    <property type="entry name" value="Zinc finger protein 333"/>
    <property type="match status" value="5"/>
</dbReference>
<dbReference type="FunFam" id="3.30.160.60:FF:002343">
    <property type="entry name" value="Zinc finger protein 33A"/>
    <property type="match status" value="1"/>
</dbReference>
<dbReference type="FunFam" id="3.30.160.60:FF:002288">
    <property type="entry name" value="Zinc finger protein 700"/>
    <property type="match status" value="1"/>
</dbReference>
<dbReference type="Gene3D" id="3.30.160.60">
    <property type="entry name" value="Classic Zinc Finger"/>
    <property type="match status" value="12"/>
</dbReference>
<dbReference type="InterPro" id="IPR036236">
    <property type="entry name" value="Znf_C2H2_sf"/>
</dbReference>
<dbReference type="InterPro" id="IPR013087">
    <property type="entry name" value="Znf_C2H2_type"/>
</dbReference>
<dbReference type="PANTHER" id="PTHR14003">
    <property type="entry name" value="TRANSCRIPTIONAL REPRESSOR PROTEIN YY"/>
    <property type="match status" value="1"/>
</dbReference>
<dbReference type="PANTHER" id="PTHR14003:SF23">
    <property type="entry name" value="ZINC FINGER PROTEIN 143"/>
    <property type="match status" value="1"/>
</dbReference>
<dbReference type="Pfam" id="PF00096">
    <property type="entry name" value="zf-C2H2"/>
    <property type="match status" value="6"/>
</dbReference>
<dbReference type="SMART" id="SM00355">
    <property type="entry name" value="ZnF_C2H2"/>
    <property type="match status" value="12"/>
</dbReference>
<dbReference type="SUPFAM" id="SSF57667">
    <property type="entry name" value="beta-beta-alpha zinc fingers"/>
    <property type="match status" value="7"/>
</dbReference>
<dbReference type="PROSITE" id="PS00028">
    <property type="entry name" value="ZINC_FINGER_C2H2_1"/>
    <property type="match status" value="10"/>
</dbReference>
<dbReference type="PROSITE" id="PS50157">
    <property type="entry name" value="ZINC_FINGER_C2H2_2"/>
    <property type="match status" value="13"/>
</dbReference>
<keyword id="KW-0238">DNA-binding</keyword>
<keyword id="KW-0479">Metal-binding</keyword>
<keyword id="KW-0539">Nucleus</keyword>
<keyword id="KW-1185">Reference proteome</keyword>
<keyword id="KW-0677">Repeat</keyword>
<keyword id="KW-0804">Transcription</keyword>
<keyword id="KW-0805">Transcription regulation</keyword>
<keyword id="KW-0862">Zinc</keyword>
<keyword id="KW-0863">Zinc-finger</keyword>
<proteinExistence type="evidence at protein level"/>
<sequence>MGERLFESAEGSQCGETFTQVPEDMLNKKTLPGVKSCESGTCGEIFMGYSSFNRNIRTDTGHQPHKCQKFLEKPYKHKQRRKALSHSHCFRTHERPHTREKPFDCKECEKSFISPASIRRYMVTHSGDGPYKCKFCGKALDCLSLYLTHERTHTGEKRYECKQCGKAFSWHSSVRIHERTHTGEKPYECKECGKSFNFSSSFRRHERTHTGEKPYKCKECGKAFNCPSSFHRHERTHTGEKPYECKLYGKALSRLISFRRHMRMHTGERPHKCKICGKAFYSPSSFQRHERSHTGEKPYKCKQCGKAFTCSTSFQYHERTHTGEKPDGCKQCGKAFRSAKYIRIHGRTHTGEKPYECKQCGKAFHCVSSFHRHERTHAGEKPYECKHCGKAFTCSIYIRIHERIHTGEKPYQCKECGKAFIRSSYCRKHERTHTINI</sequence>
<feature type="chain" id="PRO_0000047614" description="Zinc finger protein 491">
    <location>
        <begin position="1"/>
        <end position="437"/>
    </location>
</feature>
<feature type="zinc finger region" description="C2H2-type 1; degenerate" evidence="1">
    <location>
        <begin position="35"/>
        <end position="59"/>
    </location>
</feature>
<feature type="zinc finger region" description="C2H2-type 2; degenerate" evidence="1">
    <location>
        <begin position="103"/>
        <end position="125"/>
    </location>
</feature>
<feature type="zinc finger region" description="C2H2-type 3" evidence="1">
    <location>
        <begin position="131"/>
        <end position="153"/>
    </location>
</feature>
<feature type="zinc finger region" description="C2H2-type 4" evidence="1">
    <location>
        <begin position="159"/>
        <end position="181"/>
    </location>
</feature>
<feature type="zinc finger region" description="C2H2-type 5" evidence="1">
    <location>
        <begin position="187"/>
        <end position="209"/>
    </location>
</feature>
<feature type="zinc finger region" description="C2H2-type 6" evidence="1">
    <location>
        <begin position="215"/>
        <end position="237"/>
    </location>
</feature>
<feature type="zinc finger region" description="C2H2-type 7" evidence="1">
    <location>
        <begin position="243"/>
        <end position="265"/>
    </location>
</feature>
<feature type="zinc finger region" description="C2H2-type 8" evidence="1">
    <location>
        <begin position="271"/>
        <end position="293"/>
    </location>
</feature>
<feature type="zinc finger region" description="C2H2-type 9" evidence="1">
    <location>
        <begin position="299"/>
        <end position="321"/>
    </location>
</feature>
<feature type="zinc finger region" description="C2H2-type 10" evidence="1">
    <location>
        <begin position="327"/>
        <end position="349"/>
    </location>
</feature>
<feature type="zinc finger region" description="C2H2-type 11" evidence="1">
    <location>
        <begin position="355"/>
        <end position="377"/>
    </location>
</feature>
<feature type="zinc finger region" description="C2H2-type 12" evidence="1">
    <location>
        <begin position="383"/>
        <end position="405"/>
    </location>
</feature>
<feature type="zinc finger region" description="C2H2-type 13" evidence="1">
    <location>
        <begin position="411"/>
        <end position="433"/>
    </location>
</feature>
<protein>
    <recommendedName>
        <fullName>Zinc finger protein 491</fullName>
    </recommendedName>
</protein>
<comment type="function">
    <text>May be involved in transcriptional regulation.</text>
</comment>
<comment type="interaction">
    <interactant intactId="EBI-12019860">
        <id>Q8N8L2</id>
    </interactant>
    <interactant intactId="EBI-739624">
        <id>Q8NHQ1</id>
        <label>CEP70</label>
    </interactant>
    <organismsDiffer>false</organismsDiffer>
    <experiments>3</experiments>
</comment>
<comment type="interaction">
    <interactant intactId="EBI-12019860">
        <id>Q8N8L2</id>
    </interactant>
    <interactant intactId="EBI-750020">
        <id>P49760</id>
        <label>CLK2</label>
    </interactant>
    <organismsDiffer>false</organismsDiffer>
    <experiments>3</experiments>
</comment>
<comment type="interaction">
    <interactant intactId="EBI-12019860">
        <id>Q8N8L2</id>
    </interactant>
    <interactant intactId="EBI-11959885">
        <id>Q07627</id>
        <label>KRTAP1-1</label>
    </interactant>
    <organismsDiffer>false</organismsDiffer>
    <experiments>3</experiments>
</comment>
<comment type="interaction">
    <interactant intactId="EBI-12019860">
        <id>Q8N8L2</id>
    </interactant>
    <interactant intactId="EBI-10172290">
        <id>P60409</id>
        <label>KRTAP10-7</label>
    </interactant>
    <organismsDiffer>false</organismsDiffer>
    <experiments>5</experiments>
</comment>
<comment type="interaction">
    <interactant intactId="EBI-12019860">
        <id>Q8N8L2</id>
    </interactant>
    <interactant intactId="EBI-10171774">
        <id>P60410</id>
        <label>KRTAP10-8</label>
    </interactant>
    <organismsDiffer>false</organismsDiffer>
    <experiments>3</experiments>
</comment>
<comment type="interaction">
    <interactant intactId="EBI-12019860">
        <id>Q8N8L2</id>
    </interactant>
    <interactant intactId="EBI-11953334">
        <id>P60328</id>
        <label>KRTAP12-3</label>
    </interactant>
    <organismsDiffer>false</organismsDiffer>
    <experiments>3</experiments>
</comment>
<comment type="interaction">
    <interactant intactId="EBI-12019860">
        <id>Q8N8L2</id>
    </interactant>
    <interactant intactId="EBI-14065470">
        <id>Q9BYR9</id>
        <label>KRTAP2-4</label>
    </interactant>
    <organismsDiffer>false</organismsDiffer>
    <experiments>3</experiments>
</comment>
<comment type="interaction">
    <interactant intactId="EBI-12019860">
        <id>Q8N8L2</id>
    </interactant>
    <interactant intactId="EBI-724076">
        <id>Q99750</id>
        <label>MDFI</label>
    </interactant>
    <organismsDiffer>false</organismsDiffer>
    <experiments>5</experiments>
</comment>
<comment type="subcellular location">
    <subcellularLocation>
        <location evidence="2">Nucleus</location>
    </subcellularLocation>
</comment>
<comment type="similarity">
    <text evidence="2">Belongs to the krueppel C2H2-type zinc-finger protein family.</text>
</comment>
<comment type="sequence caution" evidence="2">
    <conflict type="erroneous termination">
        <sequence resource="EMBL-CDS" id="BAC03809"/>
    </conflict>
    <text>Truncated C-terminus.</text>
</comment>
<accession>Q8N8L2</accession>
<accession>Q3MJ35</accession>
<accession>Q8NAT8</accession>
<reference key="1">
    <citation type="journal article" date="2004" name="Nat. Genet.">
        <title>Complete sequencing and characterization of 21,243 full-length human cDNAs.</title>
        <authorList>
            <person name="Ota T."/>
            <person name="Suzuki Y."/>
            <person name="Nishikawa T."/>
            <person name="Otsuki T."/>
            <person name="Sugiyama T."/>
            <person name="Irie R."/>
            <person name="Wakamatsu A."/>
            <person name="Hayashi K."/>
            <person name="Sato H."/>
            <person name="Nagai K."/>
            <person name="Kimura K."/>
            <person name="Makita H."/>
            <person name="Sekine M."/>
            <person name="Obayashi M."/>
            <person name="Nishi T."/>
            <person name="Shibahara T."/>
            <person name="Tanaka T."/>
            <person name="Ishii S."/>
            <person name="Yamamoto J."/>
            <person name="Saito K."/>
            <person name="Kawai Y."/>
            <person name="Isono Y."/>
            <person name="Nakamura Y."/>
            <person name="Nagahari K."/>
            <person name="Murakami K."/>
            <person name="Yasuda T."/>
            <person name="Iwayanagi T."/>
            <person name="Wagatsuma M."/>
            <person name="Shiratori A."/>
            <person name="Sudo H."/>
            <person name="Hosoiri T."/>
            <person name="Kaku Y."/>
            <person name="Kodaira H."/>
            <person name="Kondo H."/>
            <person name="Sugawara M."/>
            <person name="Takahashi M."/>
            <person name="Kanda K."/>
            <person name="Yokoi T."/>
            <person name="Furuya T."/>
            <person name="Kikkawa E."/>
            <person name="Omura Y."/>
            <person name="Abe K."/>
            <person name="Kamihara K."/>
            <person name="Katsuta N."/>
            <person name="Sato K."/>
            <person name="Tanikawa M."/>
            <person name="Yamazaki M."/>
            <person name="Ninomiya K."/>
            <person name="Ishibashi T."/>
            <person name="Yamashita H."/>
            <person name="Murakawa K."/>
            <person name="Fujimori K."/>
            <person name="Tanai H."/>
            <person name="Kimata M."/>
            <person name="Watanabe M."/>
            <person name="Hiraoka S."/>
            <person name="Chiba Y."/>
            <person name="Ishida S."/>
            <person name="Ono Y."/>
            <person name="Takiguchi S."/>
            <person name="Watanabe S."/>
            <person name="Yosida M."/>
            <person name="Hotuta T."/>
            <person name="Kusano J."/>
            <person name="Kanehori K."/>
            <person name="Takahashi-Fujii A."/>
            <person name="Hara H."/>
            <person name="Tanase T.-O."/>
            <person name="Nomura Y."/>
            <person name="Togiya S."/>
            <person name="Komai F."/>
            <person name="Hara R."/>
            <person name="Takeuchi K."/>
            <person name="Arita M."/>
            <person name="Imose N."/>
            <person name="Musashino K."/>
            <person name="Yuuki H."/>
            <person name="Oshima A."/>
            <person name="Sasaki N."/>
            <person name="Aotsuka S."/>
            <person name="Yoshikawa Y."/>
            <person name="Matsunawa H."/>
            <person name="Ichihara T."/>
            <person name="Shiohata N."/>
            <person name="Sano S."/>
            <person name="Moriya S."/>
            <person name="Momiyama H."/>
            <person name="Satoh N."/>
            <person name="Takami S."/>
            <person name="Terashima Y."/>
            <person name="Suzuki O."/>
            <person name="Nakagawa S."/>
            <person name="Senoh A."/>
            <person name="Mizoguchi H."/>
            <person name="Goto Y."/>
            <person name="Shimizu F."/>
            <person name="Wakebe H."/>
            <person name="Hishigaki H."/>
            <person name="Watanabe T."/>
            <person name="Sugiyama A."/>
            <person name="Takemoto M."/>
            <person name="Kawakami B."/>
            <person name="Yamazaki M."/>
            <person name="Watanabe K."/>
            <person name="Kumagai A."/>
            <person name="Itakura S."/>
            <person name="Fukuzumi Y."/>
            <person name="Fujimori Y."/>
            <person name="Komiyama M."/>
            <person name="Tashiro H."/>
            <person name="Tanigami A."/>
            <person name="Fujiwara T."/>
            <person name="Ono T."/>
            <person name="Yamada K."/>
            <person name="Fujii Y."/>
            <person name="Ozaki K."/>
            <person name="Hirao M."/>
            <person name="Ohmori Y."/>
            <person name="Kawabata A."/>
            <person name="Hikiji T."/>
            <person name="Kobatake N."/>
            <person name="Inagaki H."/>
            <person name="Ikema Y."/>
            <person name="Okamoto S."/>
            <person name="Okitani R."/>
            <person name="Kawakami T."/>
            <person name="Noguchi S."/>
            <person name="Itoh T."/>
            <person name="Shigeta K."/>
            <person name="Senba T."/>
            <person name="Matsumura K."/>
            <person name="Nakajima Y."/>
            <person name="Mizuno T."/>
            <person name="Morinaga M."/>
            <person name="Sasaki M."/>
            <person name="Togashi T."/>
            <person name="Oyama M."/>
            <person name="Hata H."/>
            <person name="Watanabe M."/>
            <person name="Komatsu T."/>
            <person name="Mizushima-Sugano J."/>
            <person name="Satoh T."/>
            <person name="Shirai Y."/>
            <person name="Takahashi Y."/>
            <person name="Nakagawa K."/>
            <person name="Okumura K."/>
            <person name="Nagase T."/>
            <person name="Nomura N."/>
            <person name="Kikuchi H."/>
            <person name="Masuho Y."/>
            <person name="Yamashita R."/>
            <person name="Nakai K."/>
            <person name="Yada T."/>
            <person name="Nakamura Y."/>
            <person name="Ohara O."/>
            <person name="Isogai T."/>
            <person name="Sugano S."/>
        </authorList>
    </citation>
    <scope>NUCLEOTIDE SEQUENCE [LARGE SCALE MRNA]</scope>
    <source>
        <tissue>Brain</tissue>
    </source>
</reference>
<reference key="2">
    <citation type="journal article" date="2004" name="Genome Res.">
        <title>The status, quality, and expansion of the NIH full-length cDNA project: the Mammalian Gene Collection (MGC).</title>
        <authorList>
            <consortium name="The MGC Project Team"/>
        </authorList>
    </citation>
    <scope>NUCLEOTIDE SEQUENCE [LARGE SCALE MRNA]</scope>
    <source>
        <tissue>Brain</tissue>
    </source>
</reference>
<evidence type="ECO:0000255" key="1">
    <source>
        <dbReference type="PROSITE-ProRule" id="PRU00042"/>
    </source>
</evidence>
<evidence type="ECO:0000305" key="2"/>